<name>ACP_YERPN</name>
<proteinExistence type="inferred from homology"/>
<sequence>MSTIEERVKKIIVEQLGVKEDEVKNSASFVEDLGADSLDTVELVMALEEEFDTEIPDEEAEKITTVQAAIDFINANQQ</sequence>
<comment type="function">
    <text evidence="1">Carrier of the growing fatty acid chain in fatty acid biosynthesis.</text>
</comment>
<comment type="pathway">
    <text evidence="1">Lipid metabolism; fatty acid biosynthesis.</text>
</comment>
<comment type="subcellular location">
    <subcellularLocation>
        <location evidence="1">Cytoplasm</location>
    </subcellularLocation>
</comment>
<comment type="PTM">
    <text evidence="1">4'-phosphopantetheine is transferred from CoA to a specific serine of apo-ACP by AcpS. This modification is essential for activity because fatty acids are bound in thioester linkage to the sulfhydryl of the prosthetic group.</text>
</comment>
<comment type="similarity">
    <text evidence="1">Belongs to the acyl carrier protein (ACP) family.</text>
</comment>
<reference key="1">
    <citation type="journal article" date="2006" name="J. Bacteriol.">
        <title>Complete genome sequence of Yersinia pestis strains Antiqua and Nepal516: evidence of gene reduction in an emerging pathogen.</title>
        <authorList>
            <person name="Chain P.S.G."/>
            <person name="Hu P."/>
            <person name="Malfatti S.A."/>
            <person name="Radnedge L."/>
            <person name="Larimer F."/>
            <person name="Vergez L.M."/>
            <person name="Worsham P."/>
            <person name="Chu M.C."/>
            <person name="Andersen G.L."/>
        </authorList>
    </citation>
    <scope>NUCLEOTIDE SEQUENCE [LARGE SCALE GENOMIC DNA]</scope>
    <source>
        <strain>Nepal516</strain>
    </source>
</reference>
<reference key="2">
    <citation type="submission" date="2009-04" db="EMBL/GenBank/DDBJ databases">
        <title>Yersinia pestis Nepal516A whole genome shotgun sequencing project.</title>
        <authorList>
            <person name="Plunkett G. III"/>
            <person name="Anderson B.D."/>
            <person name="Baumler D.J."/>
            <person name="Burland V."/>
            <person name="Cabot E.L."/>
            <person name="Glasner J.D."/>
            <person name="Mau B."/>
            <person name="Neeno-Eckwall E."/>
            <person name="Perna N.T."/>
            <person name="Munk A.C."/>
            <person name="Tapia R."/>
            <person name="Green L.D."/>
            <person name="Rogers Y.C."/>
            <person name="Detter J.C."/>
            <person name="Bruce D.C."/>
            <person name="Brettin T.S."/>
        </authorList>
    </citation>
    <scope>NUCLEOTIDE SEQUENCE [LARGE SCALE GENOMIC DNA]</scope>
    <source>
        <strain>Nepal516</strain>
    </source>
</reference>
<evidence type="ECO:0000255" key="1">
    <source>
        <dbReference type="HAMAP-Rule" id="MF_01217"/>
    </source>
</evidence>
<evidence type="ECO:0000255" key="2">
    <source>
        <dbReference type="PROSITE-ProRule" id="PRU00258"/>
    </source>
</evidence>
<gene>
    <name evidence="1" type="primary">acpP</name>
    <name type="ordered locus">YPN_2029</name>
    <name type="ORF">YP516_2261</name>
</gene>
<protein>
    <recommendedName>
        <fullName evidence="1">Acyl carrier protein</fullName>
        <shortName evidence="1">ACP</shortName>
    </recommendedName>
</protein>
<organism>
    <name type="scientific">Yersinia pestis bv. Antiqua (strain Nepal516)</name>
    <dbReference type="NCBI Taxonomy" id="377628"/>
    <lineage>
        <taxon>Bacteria</taxon>
        <taxon>Pseudomonadati</taxon>
        <taxon>Pseudomonadota</taxon>
        <taxon>Gammaproteobacteria</taxon>
        <taxon>Enterobacterales</taxon>
        <taxon>Yersiniaceae</taxon>
        <taxon>Yersinia</taxon>
    </lineage>
</organism>
<keyword id="KW-0963">Cytoplasm</keyword>
<keyword id="KW-0275">Fatty acid biosynthesis</keyword>
<keyword id="KW-0276">Fatty acid metabolism</keyword>
<keyword id="KW-0444">Lipid biosynthesis</keyword>
<keyword id="KW-0443">Lipid metabolism</keyword>
<keyword id="KW-0596">Phosphopantetheine</keyword>
<keyword id="KW-0597">Phosphoprotein</keyword>
<feature type="chain" id="PRO_1000066722" description="Acyl carrier protein">
    <location>
        <begin position="1"/>
        <end position="78"/>
    </location>
</feature>
<feature type="domain" description="Carrier" evidence="2">
    <location>
        <begin position="2"/>
        <end position="77"/>
    </location>
</feature>
<feature type="modified residue" description="O-(pantetheine 4'-phosphoryl)serine" evidence="2">
    <location>
        <position position="37"/>
    </location>
</feature>
<accession>Q1CI22</accession>
<accession>C4GTZ5</accession>
<dbReference type="EMBL" id="CP000305">
    <property type="protein sequence ID" value="ABG18358.1"/>
    <property type="molecule type" value="Genomic_DNA"/>
</dbReference>
<dbReference type="EMBL" id="ACNQ01000011">
    <property type="protein sequence ID" value="EEO76659.1"/>
    <property type="molecule type" value="Genomic_DNA"/>
</dbReference>
<dbReference type="RefSeq" id="WP_002220787.1">
    <property type="nucleotide sequence ID" value="NZ_ACNQ01000011.1"/>
</dbReference>
<dbReference type="SMR" id="Q1CI22"/>
<dbReference type="GeneID" id="97455792"/>
<dbReference type="KEGG" id="ypn:YPN_2029"/>
<dbReference type="HOGENOM" id="CLU_108696_5_1_6"/>
<dbReference type="UniPathway" id="UPA00094"/>
<dbReference type="Proteomes" id="UP000008936">
    <property type="component" value="Chromosome"/>
</dbReference>
<dbReference type="GO" id="GO:0005829">
    <property type="term" value="C:cytosol"/>
    <property type="evidence" value="ECO:0007669"/>
    <property type="project" value="TreeGrafter"/>
</dbReference>
<dbReference type="GO" id="GO:0016020">
    <property type="term" value="C:membrane"/>
    <property type="evidence" value="ECO:0007669"/>
    <property type="project" value="GOC"/>
</dbReference>
<dbReference type="GO" id="GO:0000035">
    <property type="term" value="F:acyl binding"/>
    <property type="evidence" value="ECO:0007669"/>
    <property type="project" value="TreeGrafter"/>
</dbReference>
<dbReference type="GO" id="GO:0000036">
    <property type="term" value="F:acyl carrier activity"/>
    <property type="evidence" value="ECO:0007669"/>
    <property type="project" value="UniProtKB-UniRule"/>
</dbReference>
<dbReference type="GO" id="GO:0009245">
    <property type="term" value="P:lipid A biosynthetic process"/>
    <property type="evidence" value="ECO:0007669"/>
    <property type="project" value="TreeGrafter"/>
</dbReference>
<dbReference type="FunFam" id="1.10.1200.10:FF:000001">
    <property type="entry name" value="Acyl carrier protein"/>
    <property type="match status" value="1"/>
</dbReference>
<dbReference type="Gene3D" id="1.10.1200.10">
    <property type="entry name" value="ACP-like"/>
    <property type="match status" value="1"/>
</dbReference>
<dbReference type="HAMAP" id="MF_01217">
    <property type="entry name" value="Acyl_carrier"/>
    <property type="match status" value="1"/>
</dbReference>
<dbReference type="InterPro" id="IPR003231">
    <property type="entry name" value="ACP"/>
</dbReference>
<dbReference type="InterPro" id="IPR036736">
    <property type="entry name" value="ACP-like_sf"/>
</dbReference>
<dbReference type="InterPro" id="IPR009081">
    <property type="entry name" value="PP-bd_ACP"/>
</dbReference>
<dbReference type="InterPro" id="IPR006162">
    <property type="entry name" value="Ppantetheine_attach_site"/>
</dbReference>
<dbReference type="NCBIfam" id="TIGR00517">
    <property type="entry name" value="acyl_carrier"/>
    <property type="match status" value="1"/>
</dbReference>
<dbReference type="NCBIfam" id="NF002148">
    <property type="entry name" value="PRK00982.1-2"/>
    <property type="match status" value="1"/>
</dbReference>
<dbReference type="NCBIfam" id="NF002149">
    <property type="entry name" value="PRK00982.1-3"/>
    <property type="match status" value="1"/>
</dbReference>
<dbReference type="NCBIfam" id="NF002150">
    <property type="entry name" value="PRK00982.1-4"/>
    <property type="match status" value="1"/>
</dbReference>
<dbReference type="NCBIfam" id="NF002151">
    <property type="entry name" value="PRK00982.1-5"/>
    <property type="match status" value="1"/>
</dbReference>
<dbReference type="PANTHER" id="PTHR20863">
    <property type="entry name" value="ACYL CARRIER PROTEIN"/>
    <property type="match status" value="1"/>
</dbReference>
<dbReference type="PANTHER" id="PTHR20863:SF76">
    <property type="entry name" value="CARRIER DOMAIN-CONTAINING PROTEIN"/>
    <property type="match status" value="1"/>
</dbReference>
<dbReference type="Pfam" id="PF00550">
    <property type="entry name" value="PP-binding"/>
    <property type="match status" value="1"/>
</dbReference>
<dbReference type="SUPFAM" id="SSF47336">
    <property type="entry name" value="ACP-like"/>
    <property type="match status" value="1"/>
</dbReference>
<dbReference type="PROSITE" id="PS50075">
    <property type="entry name" value="CARRIER"/>
    <property type="match status" value="1"/>
</dbReference>
<dbReference type="PROSITE" id="PS00012">
    <property type="entry name" value="PHOSPHOPANTETHEINE"/>
    <property type="match status" value="1"/>
</dbReference>